<organism>
    <name type="scientific">Shewanella sp. (strain MR-4)</name>
    <dbReference type="NCBI Taxonomy" id="60480"/>
    <lineage>
        <taxon>Bacteria</taxon>
        <taxon>Pseudomonadati</taxon>
        <taxon>Pseudomonadota</taxon>
        <taxon>Gammaproteobacteria</taxon>
        <taxon>Alteromonadales</taxon>
        <taxon>Shewanellaceae</taxon>
        <taxon>Shewanella</taxon>
    </lineage>
</organism>
<evidence type="ECO:0000255" key="1">
    <source>
        <dbReference type="HAMAP-Rule" id="MF_01813"/>
    </source>
</evidence>
<proteinExistence type="inferred from homology"/>
<accession>Q0HEA1</accession>
<gene>
    <name evidence="1" type="primary">ubiE</name>
    <name type="ordered locus">Shewmr4_3551</name>
</gene>
<name>UBIE_SHESM</name>
<dbReference type="EC" id="2.1.1.163" evidence="1"/>
<dbReference type="EC" id="2.1.1.201" evidence="1"/>
<dbReference type="EMBL" id="CP000446">
    <property type="protein sequence ID" value="ABI40616.1"/>
    <property type="molecule type" value="Genomic_DNA"/>
</dbReference>
<dbReference type="RefSeq" id="WP_011624280.1">
    <property type="nucleotide sequence ID" value="NC_008321.1"/>
</dbReference>
<dbReference type="SMR" id="Q0HEA1"/>
<dbReference type="GeneID" id="94729646"/>
<dbReference type="KEGG" id="she:Shewmr4_3551"/>
<dbReference type="HOGENOM" id="CLU_037990_0_0_6"/>
<dbReference type="UniPathway" id="UPA00079">
    <property type="reaction ID" value="UER00169"/>
</dbReference>
<dbReference type="UniPathway" id="UPA00232"/>
<dbReference type="GO" id="GO:0008425">
    <property type="term" value="F:2-methoxy-6-polyprenyl-1,4-benzoquinol methyltransferase activity"/>
    <property type="evidence" value="ECO:0007669"/>
    <property type="project" value="UniProtKB-UniRule"/>
</dbReference>
<dbReference type="GO" id="GO:0043770">
    <property type="term" value="F:demethylmenaquinone methyltransferase activity"/>
    <property type="evidence" value="ECO:0007669"/>
    <property type="project" value="UniProtKB-UniRule"/>
</dbReference>
<dbReference type="GO" id="GO:0009060">
    <property type="term" value="P:aerobic respiration"/>
    <property type="evidence" value="ECO:0007669"/>
    <property type="project" value="UniProtKB-UniRule"/>
</dbReference>
<dbReference type="GO" id="GO:0009234">
    <property type="term" value="P:menaquinone biosynthetic process"/>
    <property type="evidence" value="ECO:0007669"/>
    <property type="project" value="UniProtKB-UniRule"/>
</dbReference>
<dbReference type="GO" id="GO:0032259">
    <property type="term" value="P:methylation"/>
    <property type="evidence" value="ECO:0007669"/>
    <property type="project" value="UniProtKB-KW"/>
</dbReference>
<dbReference type="CDD" id="cd02440">
    <property type="entry name" value="AdoMet_MTases"/>
    <property type="match status" value="1"/>
</dbReference>
<dbReference type="FunFam" id="3.40.50.150:FF:000014">
    <property type="entry name" value="Ubiquinone/menaquinone biosynthesis C-methyltransferase UbiE"/>
    <property type="match status" value="1"/>
</dbReference>
<dbReference type="Gene3D" id="3.40.50.150">
    <property type="entry name" value="Vaccinia Virus protein VP39"/>
    <property type="match status" value="1"/>
</dbReference>
<dbReference type="HAMAP" id="MF_01813">
    <property type="entry name" value="MenG_UbiE_methyltr"/>
    <property type="match status" value="1"/>
</dbReference>
<dbReference type="InterPro" id="IPR029063">
    <property type="entry name" value="SAM-dependent_MTases_sf"/>
</dbReference>
<dbReference type="InterPro" id="IPR004033">
    <property type="entry name" value="UbiE/COQ5_MeTrFase"/>
</dbReference>
<dbReference type="InterPro" id="IPR023576">
    <property type="entry name" value="UbiE/COQ5_MeTrFase_CS"/>
</dbReference>
<dbReference type="NCBIfam" id="TIGR01934">
    <property type="entry name" value="MenG_MenH_UbiE"/>
    <property type="match status" value="1"/>
</dbReference>
<dbReference type="NCBIfam" id="NF001240">
    <property type="entry name" value="PRK00216.1-1"/>
    <property type="match status" value="1"/>
</dbReference>
<dbReference type="NCBIfam" id="NF001242">
    <property type="entry name" value="PRK00216.1-3"/>
    <property type="match status" value="1"/>
</dbReference>
<dbReference type="NCBIfam" id="NF001244">
    <property type="entry name" value="PRK00216.1-5"/>
    <property type="match status" value="1"/>
</dbReference>
<dbReference type="PANTHER" id="PTHR43591:SF24">
    <property type="entry name" value="2-METHOXY-6-POLYPRENYL-1,4-BENZOQUINOL METHYLASE, MITOCHONDRIAL"/>
    <property type="match status" value="1"/>
</dbReference>
<dbReference type="PANTHER" id="PTHR43591">
    <property type="entry name" value="METHYLTRANSFERASE"/>
    <property type="match status" value="1"/>
</dbReference>
<dbReference type="Pfam" id="PF01209">
    <property type="entry name" value="Ubie_methyltran"/>
    <property type="match status" value="1"/>
</dbReference>
<dbReference type="SUPFAM" id="SSF53335">
    <property type="entry name" value="S-adenosyl-L-methionine-dependent methyltransferases"/>
    <property type="match status" value="1"/>
</dbReference>
<dbReference type="PROSITE" id="PS51608">
    <property type="entry name" value="SAM_MT_UBIE"/>
    <property type="match status" value="1"/>
</dbReference>
<dbReference type="PROSITE" id="PS01183">
    <property type="entry name" value="UBIE_1"/>
    <property type="match status" value="1"/>
</dbReference>
<dbReference type="PROSITE" id="PS01184">
    <property type="entry name" value="UBIE_2"/>
    <property type="match status" value="1"/>
</dbReference>
<protein>
    <recommendedName>
        <fullName evidence="1">Ubiquinone/menaquinone biosynthesis C-methyltransferase UbiE</fullName>
        <ecNumber evidence="1">2.1.1.163</ecNumber>
        <ecNumber evidence="1">2.1.1.201</ecNumber>
    </recommendedName>
    <alternativeName>
        <fullName evidence="1">2-methoxy-6-polyprenyl-1,4-benzoquinol methylase</fullName>
    </alternativeName>
    <alternativeName>
        <fullName evidence="1">Demethylmenaquinone methyltransferase</fullName>
    </alternativeName>
</protein>
<reference key="1">
    <citation type="submission" date="2006-08" db="EMBL/GenBank/DDBJ databases">
        <title>Complete sequence of Shewanella sp. MR-4.</title>
        <authorList>
            <consortium name="US DOE Joint Genome Institute"/>
            <person name="Copeland A."/>
            <person name="Lucas S."/>
            <person name="Lapidus A."/>
            <person name="Barry K."/>
            <person name="Detter J.C."/>
            <person name="Glavina del Rio T."/>
            <person name="Hammon N."/>
            <person name="Israni S."/>
            <person name="Dalin E."/>
            <person name="Tice H."/>
            <person name="Pitluck S."/>
            <person name="Kiss H."/>
            <person name="Brettin T."/>
            <person name="Bruce D."/>
            <person name="Han C."/>
            <person name="Tapia R."/>
            <person name="Gilna P."/>
            <person name="Schmutz J."/>
            <person name="Larimer F."/>
            <person name="Land M."/>
            <person name="Hauser L."/>
            <person name="Kyrpides N."/>
            <person name="Mikhailova N."/>
            <person name="Nealson K."/>
            <person name="Konstantinidis K."/>
            <person name="Klappenbach J."/>
            <person name="Tiedje J."/>
            <person name="Richardson P."/>
        </authorList>
    </citation>
    <scope>NUCLEOTIDE SEQUENCE [LARGE SCALE GENOMIC DNA]</scope>
    <source>
        <strain>MR-4</strain>
    </source>
</reference>
<sequence length="251" mass="28105">MSEGESKNTHFGYKTVEADKKADLVAGVFHSVAAKYDIMNDVMSFGIHRFWKRYTIEVSGARPGMKVLDLAGGTGDLTAKFSHLVGEKGEVVLADINDSMLKVGRTKLRDRGIVGNVSYVQANAEALPFPDNHFDIITIAFGLRNVTDKDAALRSMNRVLKPGGKLLVLEFSKPQHELMRKVYDLYSFKVLPKMGEIITKDADSYEYLAESIRMHPDQETLKQMMVDAGFEQVDYTNMTDGIVALHRGYKF</sequence>
<keyword id="KW-0474">Menaquinone biosynthesis</keyword>
<keyword id="KW-0489">Methyltransferase</keyword>
<keyword id="KW-0949">S-adenosyl-L-methionine</keyword>
<keyword id="KW-0808">Transferase</keyword>
<keyword id="KW-0831">Ubiquinone biosynthesis</keyword>
<comment type="function">
    <text evidence="1">Methyltransferase required for the conversion of demethylmenaquinol (DMKH2) to menaquinol (MKH2) and the conversion of 2-polyprenyl-6-methoxy-1,4-benzoquinol (DDMQH2) to 2-polyprenyl-3-methyl-6-methoxy-1,4-benzoquinol (DMQH2).</text>
</comment>
<comment type="catalytic activity">
    <reaction evidence="1">
        <text>a 2-demethylmenaquinol + S-adenosyl-L-methionine = a menaquinol + S-adenosyl-L-homocysteine + H(+)</text>
        <dbReference type="Rhea" id="RHEA:42640"/>
        <dbReference type="Rhea" id="RHEA-COMP:9539"/>
        <dbReference type="Rhea" id="RHEA-COMP:9563"/>
        <dbReference type="ChEBI" id="CHEBI:15378"/>
        <dbReference type="ChEBI" id="CHEBI:18151"/>
        <dbReference type="ChEBI" id="CHEBI:55437"/>
        <dbReference type="ChEBI" id="CHEBI:57856"/>
        <dbReference type="ChEBI" id="CHEBI:59789"/>
        <dbReference type="EC" id="2.1.1.163"/>
    </reaction>
</comment>
<comment type="catalytic activity">
    <reaction evidence="1">
        <text>a 2-methoxy-6-(all-trans-polyprenyl)benzene-1,4-diol + S-adenosyl-L-methionine = a 5-methoxy-2-methyl-3-(all-trans-polyprenyl)benzene-1,4-diol + S-adenosyl-L-homocysteine + H(+)</text>
        <dbReference type="Rhea" id="RHEA:28286"/>
        <dbReference type="Rhea" id="RHEA-COMP:10858"/>
        <dbReference type="Rhea" id="RHEA-COMP:10859"/>
        <dbReference type="ChEBI" id="CHEBI:15378"/>
        <dbReference type="ChEBI" id="CHEBI:57856"/>
        <dbReference type="ChEBI" id="CHEBI:59789"/>
        <dbReference type="ChEBI" id="CHEBI:84166"/>
        <dbReference type="ChEBI" id="CHEBI:84167"/>
        <dbReference type="EC" id="2.1.1.201"/>
    </reaction>
</comment>
<comment type="pathway">
    <text evidence="1">Quinol/quinone metabolism; menaquinone biosynthesis; menaquinol from 1,4-dihydroxy-2-naphthoate: step 2/2.</text>
</comment>
<comment type="pathway">
    <text evidence="1">Cofactor biosynthesis; ubiquinone biosynthesis.</text>
</comment>
<comment type="similarity">
    <text evidence="1">Belongs to the class I-like SAM-binding methyltransferase superfamily. MenG/UbiE family.</text>
</comment>
<feature type="chain" id="PRO_1000056300" description="Ubiquinone/menaquinone biosynthesis C-methyltransferase UbiE">
    <location>
        <begin position="1"/>
        <end position="251"/>
    </location>
</feature>
<feature type="binding site" evidence="1">
    <location>
        <position position="74"/>
    </location>
    <ligand>
        <name>S-adenosyl-L-methionine</name>
        <dbReference type="ChEBI" id="CHEBI:59789"/>
    </ligand>
</feature>
<feature type="binding site" evidence="1">
    <location>
        <position position="95"/>
    </location>
    <ligand>
        <name>S-adenosyl-L-methionine</name>
        <dbReference type="ChEBI" id="CHEBI:59789"/>
    </ligand>
</feature>
<feature type="binding site" evidence="1">
    <location>
        <begin position="123"/>
        <end position="124"/>
    </location>
    <ligand>
        <name>S-adenosyl-L-methionine</name>
        <dbReference type="ChEBI" id="CHEBI:59789"/>
    </ligand>
</feature>